<sequence>MAPARKFFVGGNWKMNGRKNNLGELINTLNAAKLPADTEVVCAPPTAYIDFARQKLDPKIAVAAQNCYKVANGAFTGEIGPGMIKDLGATWVVLGHSERRHVFGESDELIGQKVAHALAEGLGVIACIGEKLDEREAGITEKVVFEQTKVIADNVKDWNKVVLAYEPVWAIGTGKTATPQQAQEVHEKLRGWLKTHVPEAVAHSTRIIYGGSVTGATCKELASQPDVDGFRVSGASLKPEFVDIINAK</sequence>
<reference key="1">
    <citation type="submission" date="2005-08" db="EMBL/GenBank/DDBJ databases">
        <title>Cloning of porcine TPI1 gene cDNA.</title>
        <authorList>
            <person name="Li T."/>
            <person name="Chen Y.S."/>
            <person name="Li J.Q."/>
            <person name="Wang C."/>
        </authorList>
    </citation>
    <scope>NUCLEOTIDE SEQUENCE [MRNA]</scope>
</reference>
<reference key="2">
    <citation type="journal article" date="1996" name="Mamm. Genome">
        <title>Evaluation and characterization of a porcine small intestine cDNA library: analysis of 839 clones.</title>
        <authorList>
            <person name="Winteroe A.K."/>
            <person name="Fredholm M."/>
            <person name="Davies W."/>
        </authorList>
    </citation>
    <scope>NUCLEOTIDE SEQUENCE [LARGE SCALE MRNA] OF 48-107</scope>
    <source>
        <tissue>Small intestine</tissue>
    </source>
</reference>
<name>TPIS_PIG</name>
<feature type="initiator methionine" description="Removed" evidence="4">
    <location>
        <position position="1"/>
    </location>
</feature>
<feature type="chain" id="PRO_0000090118" description="Triosephosphate isomerase">
    <location>
        <begin position="2"/>
        <end position="248"/>
    </location>
</feature>
<feature type="active site" description="Electrophile" evidence="5">
    <location>
        <position position="96"/>
    </location>
</feature>
<feature type="active site" description="Proton acceptor" evidence="5">
    <location>
        <position position="166"/>
    </location>
</feature>
<feature type="binding site" evidence="5">
    <location>
        <position position="12"/>
    </location>
    <ligand>
        <name>substrate</name>
    </ligand>
</feature>
<feature type="binding site" evidence="5">
    <location>
        <position position="14"/>
    </location>
    <ligand>
        <name>substrate</name>
    </ligand>
</feature>
<feature type="modified residue" description="N6-acetyllysine" evidence="4">
    <location>
        <position position="14"/>
    </location>
</feature>
<feature type="modified residue" description="3'-nitrotyrosine" evidence="2">
    <location>
        <position position="68"/>
    </location>
</feature>
<feature type="modified residue" description="Phosphoserine" evidence="3">
    <location>
        <position position="106"/>
    </location>
</feature>
<feature type="modified residue" description="N6-succinyllysine" evidence="2">
    <location>
        <position position="149"/>
    </location>
</feature>
<feature type="modified residue" description="N6-acetyllysine; alternate" evidence="2">
    <location>
        <position position="156"/>
    </location>
</feature>
<feature type="modified residue" description="N6-succinyllysine; alternate" evidence="2">
    <location>
        <position position="156"/>
    </location>
</feature>
<feature type="modified residue" description="Phosphothreonine" evidence="2">
    <location>
        <position position="173"/>
    </location>
</feature>
<feature type="modified residue" description="N6-acetyllysine; alternate" evidence="4">
    <location>
        <position position="194"/>
    </location>
</feature>
<feature type="modified residue" description="N6-methyllysine; alternate" evidence="4">
    <location>
        <position position="194"/>
    </location>
</feature>
<feature type="modified residue" description="N6-succinyllysine; alternate" evidence="2">
    <location>
        <position position="194"/>
    </location>
</feature>
<feature type="modified residue" description="3'-nitrotyrosine" evidence="2">
    <location>
        <position position="209"/>
    </location>
</feature>
<feature type="modified residue" description="Phosphoserine" evidence="4">
    <location>
        <position position="212"/>
    </location>
</feature>
<feature type="modified residue" description="Phosphothreonine" evidence="4">
    <location>
        <position position="214"/>
    </location>
</feature>
<feature type="modified residue" description="Phosphoserine" evidence="4">
    <location>
        <position position="223"/>
    </location>
</feature>
<feature type="modified residue" description="N6-acetyllysine" evidence="4">
    <location>
        <position position="238"/>
    </location>
</feature>
<feature type="cross-link" description="Glycyl lysine isopeptide (Lys-Gly) (interchain with G-Cter in SUMO1)" evidence="4">
    <location>
        <position position="142"/>
    </location>
</feature>
<feature type="sequence conflict" description="In Ref. 2; CAA23243." evidence="6" ref="2">
    <original>G</original>
    <variation>S</variation>
    <location>
        <position position="80"/>
    </location>
</feature>
<feature type="sequence conflict" description="In Ref. 2; CAA23243." evidence="6" ref="2">
    <original>K</original>
    <variation>R</variation>
    <location>
        <position position="85"/>
    </location>
</feature>
<comment type="function">
    <text evidence="1">Triosephosphate isomerase is an extremely efficient metabolic enzyme that catalyzes the interconversion between dihydroxyacetone phosphate (DHAP) and D-glyceraldehyde-3-phosphate (G3P) in glycolysis and gluconeogenesis.</text>
</comment>
<comment type="function">
    <text evidence="1">It is also responsible for the non-negligible production of methylglyoxal a reactive cytotoxic side-product that modifies and can alter proteins, DNA and lipids.</text>
</comment>
<comment type="catalytic activity">
    <reaction evidence="1">
        <text>dihydroxyacetone phosphate = methylglyoxal + phosphate</text>
        <dbReference type="Rhea" id="RHEA:17937"/>
        <dbReference type="ChEBI" id="CHEBI:17158"/>
        <dbReference type="ChEBI" id="CHEBI:43474"/>
        <dbReference type="ChEBI" id="CHEBI:57642"/>
        <dbReference type="EC" id="4.2.3.3"/>
    </reaction>
</comment>
<comment type="catalytic activity">
    <reaction evidence="5">
        <text>D-glyceraldehyde 3-phosphate = dihydroxyacetone phosphate</text>
        <dbReference type="Rhea" id="RHEA:18585"/>
        <dbReference type="ChEBI" id="CHEBI:57642"/>
        <dbReference type="ChEBI" id="CHEBI:59776"/>
        <dbReference type="EC" id="5.3.1.1"/>
    </reaction>
</comment>
<comment type="pathway">
    <text evidence="5">Carbohydrate degradation; glycolysis; D-glyceraldehyde 3-phosphate from glycerone phosphate: step 1/1.</text>
</comment>
<comment type="pathway">
    <text evidence="5">Carbohydrate biosynthesis; gluconeogenesis.</text>
</comment>
<comment type="subunit">
    <text evidence="5">Homodimer.</text>
</comment>
<comment type="subcellular location">
    <subcellularLocation>
        <location evidence="5">Cytoplasm</location>
    </subcellularLocation>
</comment>
<comment type="similarity">
    <text evidence="6">Belongs to the triosephosphate isomerase family.</text>
</comment>
<organism>
    <name type="scientific">Sus scrofa</name>
    <name type="common">Pig</name>
    <dbReference type="NCBI Taxonomy" id="9823"/>
    <lineage>
        <taxon>Eukaryota</taxon>
        <taxon>Metazoa</taxon>
        <taxon>Chordata</taxon>
        <taxon>Craniata</taxon>
        <taxon>Vertebrata</taxon>
        <taxon>Euteleostomi</taxon>
        <taxon>Mammalia</taxon>
        <taxon>Eutheria</taxon>
        <taxon>Laurasiatheria</taxon>
        <taxon>Artiodactyla</taxon>
        <taxon>Suina</taxon>
        <taxon>Suidae</taxon>
        <taxon>Sus</taxon>
    </lineage>
</organism>
<dbReference type="EC" id="5.3.1.1" evidence="5"/>
<dbReference type="EC" id="4.2.3.3" evidence="1"/>
<dbReference type="EMBL" id="DQ176425">
    <property type="protein sequence ID" value="ABA02206.1"/>
    <property type="molecule type" value="mRNA"/>
</dbReference>
<dbReference type="EMBL" id="F14774">
    <property type="protein sequence ID" value="CAA23243.1"/>
    <property type="molecule type" value="mRNA"/>
</dbReference>
<dbReference type="RefSeq" id="NP_001032228.1">
    <property type="nucleotide sequence ID" value="NM_001037151.1"/>
</dbReference>
<dbReference type="SMR" id="Q29371"/>
<dbReference type="FunCoup" id="Q29371">
    <property type="interactions" value="1317"/>
</dbReference>
<dbReference type="STRING" id="9823.ENSSSCP00000000730"/>
<dbReference type="PaxDb" id="9823-ENSSSCP00000000730"/>
<dbReference type="PeptideAtlas" id="Q29371"/>
<dbReference type="GeneID" id="100157582"/>
<dbReference type="KEGG" id="ssc:100157582"/>
<dbReference type="CTD" id="7167"/>
<dbReference type="eggNOG" id="KOG1643">
    <property type="taxonomic scope" value="Eukaryota"/>
</dbReference>
<dbReference type="InParanoid" id="Q29371"/>
<dbReference type="OrthoDB" id="6715177at2759"/>
<dbReference type="UniPathway" id="UPA00109">
    <property type="reaction ID" value="UER00189"/>
</dbReference>
<dbReference type="UniPathway" id="UPA00138"/>
<dbReference type="Proteomes" id="UP000008227">
    <property type="component" value="Unplaced"/>
</dbReference>
<dbReference type="Proteomes" id="UP000314985">
    <property type="component" value="Unplaced"/>
</dbReference>
<dbReference type="Proteomes" id="UP000694570">
    <property type="component" value="Unplaced"/>
</dbReference>
<dbReference type="Proteomes" id="UP000694571">
    <property type="component" value="Unplaced"/>
</dbReference>
<dbReference type="Proteomes" id="UP000694720">
    <property type="component" value="Unplaced"/>
</dbReference>
<dbReference type="Proteomes" id="UP000694722">
    <property type="component" value="Unplaced"/>
</dbReference>
<dbReference type="Proteomes" id="UP000694723">
    <property type="component" value="Unplaced"/>
</dbReference>
<dbReference type="Proteomes" id="UP000694724">
    <property type="component" value="Unplaced"/>
</dbReference>
<dbReference type="Proteomes" id="UP000694725">
    <property type="component" value="Unplaced"/>
</dbReference>
<dbReference type="Proteomes" id="UP000694726">
    <property type="component" value="Unplaced"/>
</dbReference>
<dbReference type="Proteomes" id="UP000694727">
    <property type="component" value="Unplaced"/>
</dbReference>
<dbReference type="Proteomes" id="UP000694728">
    <property type="component" value="Unplaced"/>
</dbReference>
<dbReference type="GO" id="GO:0005829">
    <property type="term" value="C:cytosol"/>
    <property type="evidence" value="ECO:0000318"/>
    <property type="project" value="GO_Central"/>
</dbReference>
<dbReference type="GO" id="GO:0008929">
    <property type="term" value="F:methylglyoxal synthase activity"/>
    <property type="evidence" value="ECO:0000250"/>
    <property type="project" value="UniProtKB"/>
</dbReference>
<dbReference type="GO" id="GO:0042803">
    <property type="term" value="F:protein homodimerization activity"/>
    <property type="evidence" value="ECO:0000250"/>
    <property type="project" value="UniProtKB"/>
</dbReference>
<dbReference type="GO" id="GO:0004807">
    <property type="term" value="F:triose-phosphate isomerase activity"/>
    <property type="evidence" value="ECO:0000250"/>
    <property type="project" value="UniProtKB"/>
</dbReference>
<dbReference type="GO" id="GO:0006094">
    <property type="term" value="P:gluconeogenesis"/>
    <property type="evidence" value="ECO:0000318"/>
    <property type="project" value="GO_Central"/>
</dbReference>
<dbReference type="GO" id="GO:0046166">
    <property type="term" value="P:glyceraldehyde-3-phosphate biosynthetic process"/>
    <property type="evidence" value="ECO:0000250"/>
    <property type="project" value="UniProtKB"/>
</dbReference>
<dbReference type="GO" id="GO:0019563">
    <property type="term" value="P:glycerol catabolic process"/>
    <property type="evidence" value="ECO:0000318"/>
    <property type="project" value="GO_Central"/>
</dbReference>
<dbReference type="GO" id="GO:0006096">
    <property type="term" value="P:glycolytic process"/>
    <property type="evidence" value="ECO:0000318"/>
    <property type="project" value="GO_Central"/>
</dbReference>
<dbReference type="GO" id="GO:0019242">
    <property type="term" value="P:methylglyoxal biosynthetic process"/>
    <property type="evidence" value="ECO:0000250"/>
    <property type="project" value="UniProtKB"/>
</dbReference>
<dbReference type="CDD" id="cd00311">
    <property type="entry name" value="TIM"/>
    <property type="match status" value="1"/>
</dbReference>
<dbReference type="FunFam" id="3.20.20.70:FF:000025">
    <property type="entry name" value="Triosephosphate isomerase"/>
    <property type="match status" value="1"/>
</dbReference>
<dbReference type="Gene3D" id="3.20.20.70">
    <property type="entry name" value="Aldolase class I"/>
    <property type="match status" value="1"/>
</dbReference>
<dbReference type="HAMAP" id="MF_00147_B">
    <property type="entry name" value="TIM_B"/>
    <property type="match status" value="1"/>
</dbReference>
<dbReference type="InterPro" id="IPR013785">
    <property type="entry name" value="Aldolase_TIM"/>
</dbReference>
<dbReference type="InterPro" id="IPR035990">
    <property type="entry name" value="TIM_sf"/>
</dbReference>
<dbReference type="InterPro" id="IPR022896">
    <property type="entry name" value="TrioseP_Isoase_bac/euk"/>
</dbReference>
<dbReference type="InterPro" id="IPR000652">
    <property type="entry name" value="Triosephosphate_isomerase"/>
</dbReference>
<dbReference type="InterPro" id="IPR020861">
    <property type="entry name" value="Triosephosphate_isomerase_AS"/>
</dbReference>
<dbReference type="NCBIfam" id="TIGR00419">
    <property type="entry name" value="tim"/>
    <property type="match status" value="1"/>
</dbReference>
<dbReference type="PANTHER" id="PTHR21139">
    <property type="entry name" value="TRIOSEPHOSPHATE ISOMERASE"/>
    <property type="match status" value="1"/>
</dbReference>
<dbReference type="PANTHER" id="PTHR21139:SF2">
    <property type="entry name" value="TRIOSEPHOSPHATE ISOMERASE"/>
    <property type="match status" value="1"/>
</dbReference>
<dbReference type="Pfam" id="PF00121">
    <property type="entry name" value="TIM"/>
    <property type="match status" value="1"/>
</dbReference>
<dbReference type="SUPFAM" id="SSF51351">
    <property type="entry name" value="Triosephosphate isomerase (TIM)"/>
    <property type="match status" value="1"/>
</dbReference>
<dbReference type="PROSITE" id="PS00171">
    <property type="entry name" value="TIM_1"/>
    <property type="match status" value="1"/>
</dbReference>
<dbReference type="PROSITE" id="PS51440">
    <property type="entry name" value="TIM_2"/>
    <property type="match status" value="1"/>
</dbReference>
<evidence type="ECO:0000250" key="1">
    <source>
        <dbReference type="UniProtKB" id="P00939"/>
    </source>
</evidence>
<evidence type="ECO:0000250" key="2">
    <source>
        <dbReference type="UniProtKB" id="P17751"/>
    </source>
</evidence>
<evidence type="ECO:0000250" key="3">
    <source>
        <dbReference type="UniProtKB" id="P48500"/>
    </source>
</evidence>
<evidence type="ECO:0000250" key="4">
    <source>
        <dbReference type="UniProtKB" id="P60174"/>
    </source>
</evidence>
<evidence type="ECO:0000255" key="5">
    <source>
        <dbReference type="PROSITE-ProRule" id="PRU10127"/>
    </source>
</evidence>
<evidence type="ECO:0000305" key="6"/>
<proteinExistence type="evidence at transcript level"/>
<gene>
    <name type="primary">TPI1</name>
</gene>
<keyword id="KW-0007">Acetylation</keyword>
<keyword id="KW-0963">Cytoplasm</keyword>
<keyword id="KW-0312">Gluconeogenesis</keyword>
<keyword id="KW-0324">Glycolysis</keyword>
<keyword id="KW-0413">Isomerase</keyword>
<keyword id="KW-1017">Isopeptide bond</keyword>
<keyword id="KW-0456">Lyase</keyword>
<keyword id="KW-0488">Methylation</keyword>
<keyword id="KW-0944">Nitration</keyword>
<keyword id="KW-0597">Phosphoprotein</keyword>
<keyword id="KW-1185">Reference proteome</keyword>
<keyword id="KW-0832">Ubl conjugation</keyword>
<accession>Q29371</accession>
<accession>Q3S2V8</accession>
<protein>
    <recommendedName>
        <fullName>Triosephosphate isomerase</fullName>
        <shortName>TIM</shortName>
        <ecNumber evidence="5">5.3.1.1</ecNumber>
    </recommendedName>
    <alternativeName>
        <fullName evidence="1">Methylglyoxal synthase</fullName>
        <ecNumber evidence="1">4.2.3.3</ecNumber>
    </alternativeName>
    <alternativeName>
        <fullName>Triose-phosphate isomerase</fullName>
    </alternativeName>
</protein>